<name>MNMG_GRABC</name>
<proteinExistence type="inferred from homology"/>
<protein>
    <recommendedName>
        <fullName evidence="1">tRNA uridine 5-carboxymethylaminomethyl modification enzyme MnmG</fullName>
    </recommendedName>
    <alternativeName>
        <fullName evidence="1">Glucose-inhibited division protein A</fullName>
    </alternativeName>
</protein>
<comment type="function">
    <text evidence="1">NAD-binding protein involved in the addition of a carboxymethylaminomethyl (cmnm) group at the wobble position (U34) of certain tRNAs, forming tRNA-cmnm(5)s(2)U34.</text>
</comment>
<comment type="cofactor">
    <cofactor evidence="1">
        <name>FAD</name>
        <dbReference type="ChEBI" id="CHEBI:57692"/>
    </cofactor>
</comment>
<comment type="subunit">
    <text evidence="1">Homodimer. Heterotetramer of two MnmE and two MnmG subunits.</text>
</comment>
<comment type="subcellular location">
    <subcellularLocation>
        <location evidence="1">Cytoplasm</location>
    </subcellularLocation>
</comment>
<comment type="similarity">
    <text evidence="1">Belongs to the MnmG family.</text>
</comment>
<evidence type="ECO:0000255" key="1">
    <source>
        <dbReference type="HAMAP-Rule" id="MF_00129"/>
    </source>
</evidence>
<sequence length="629" mass="68691">MNTSDHPAPAAYDVIVVGGGHAGCEAAAAAARTGAITALVTHQAATIGEMSCNPAIGGIGKGHLVREIDALDGLMGRAIDQACIHFKMLNRSKGPAVRGPRAQADRKLYKKAVQDILHTTPHLSIIEGSVEDLITSSGTQQTVQGVILQDGRHLSASAVVLTTGTFLRGVIHCGEQRSEAGRVGEAPSIGLAKRLDALNLRMGRLKTGTPPRIDRRSIAWEDLPEDRGENPPTPFSTLNHHIDLPQISCRISETTADTHQIIRDNLHRSAVYGGMLSGKGPRYCPSIEDKVVRFPDKTRHQVFLEPEGLDDFTVYPNGISTSLPAEVQEALLHSMPGLHNAVIIRPGYAVEYDFVDPRSLRPSLELKELPGLFLAGQINGTTGYEEAGAQGLMAGLNAARKAQGLDSVTLDRSQAYIGVLIDDLTTHGVTEPYRMFTSRSEFRLTLRADNADRRLTRWGRQAGCVSDERWKTFAAYDQAMNDALTLAAQDTRTPVQLQQVGITVRQDGRRRPLLSLIGSDPEQDQKLNQAFPWLHDLDPRVREQLEIEGAYSGYLSRQDKERRVLQQEDTILLSDHIDYSAIGGLSAEIRDKLQSLRPTSLGAASRMEGMTPAALAAISHFVRRKQCFT</sequence>
<accession>Q0BW93</accession>
<feature type="chain" id="PRO_0000345278" description="tRNA uridine 5-carboxymethylaminomethyl modification enzyme MnmG">
    <location>
        <begin position="1"/>
        <end position="629"/>
    </location>
</feature>
<feature type="binding site" evidence="1">
    <location>
        <begin position="18"/>
        <end position="23"/>
    </location>
    <ligand>
        <name>FAD</name>
        <dbReference type="ChEBI" id="CHEBI:57692"/>
    </ligand>
</feature>
<feature type="binding site" evidence="1">
    <location>
        <position position="130"/>
    </location>
    <ligand>
        <name>FAD</name>
        <dbReference type="ChEBI" id="CHEBI:57692"/>
    </ligand>
</feature>
<feature type="binding site" evidence="1">
    <location>
        <position position="188"/>
    </location>
    <ligand>
        <name>FAD</name>
        <dbReference type="ChEBI" id="CHEBI:57692"/>
    </ligand>
</feature>
<feature type="binding site" evidence="1">
    <location>
        <begin position="280"/>
        <end position="294"/>
    </location>
    <ligand>
        <name>NAD(+)</name>
        <dbReference type="ChEBI" id="CHEBI:57540"/>
    </ligand>
</feature>
<feature type="binding site" evidence="1">
    <location>
        <position position="377"/>
    </location>
    <ligand>
        <name>FAD</name>
        <dbReference type="ChEBI" id="CHEBI:57692"/>
    </ligand>
</feature>
<dbReference type="EMBL" id="CP000394">
    <property type="protein sequence ID" value="ABI60909.1"/>
    <property type="molecule type" value="Genomic_DNA"/>
</dbReference>
<dbReference type="RefSeq" id="WP_011630719.1">
    <property type="nucleotide sequence ID" value="NC_008343.2"/>
</dbReference>
<dbReference type="SMR" id="Q0BW93"/>
<dbReference type="STRING" id="391165.GbCGDNIH1_0011"/>
<dbReference type="KEGG" id="gbe:GbCGDNIH1_0011"/>
<dbReference type="eggNOG" id="COG0445">
    <property type="taxonomic scope" value="Bacteria"/>
</dbReference>
<dbReference type="HOGENOM" id="CLU_007831_2_2_5"/>
<dbReference type="OrthoDB" id="9815560at2"/>
<dbReference type="Proteomes" id="UP000001963">
    <property type="component" value="Chromosome"/>
</dbReference>
<dbReference type="GO" id="GO:0005829">
    <property type="term" value="C:cytosol"/>
    <property type="evidence" value="ECO:0007669"/>
    <property type="project" value="TreeGrafter"/>
</dbReference>
<dbReference type="GO" id="GO:0050660">
    <property type="term" value="F:flavin adenine dinucleotide binding"/>
    <property type="evidence" value="ECO:0007669"/>
    <property type="project" value="UniProtKB-UniRule"/>
</dbReference>
<dbReference type="GO" id="GO:0030488">
    <property type="term" value="P:tRNA methylation"/>
    <property type="evidence" value="ECO:0007669"/>
    <property type="project" value="TreeGrafter"/>
</dbReference>
<dbReference type="GO" id="GO:0002098">
    <property type="term" value="P:tRNA wobble uridine modification"/>
    <property type="evidence" value="ECO:0007669"/>
    <property type="project" value="InterPro"/>
</dbReference>
<dbReference type="FunFam" id="3.50.50.60:FF:000145">
    <property type="entry name" value="tRNA uridine 5-carboxymethylaminomethyl modification enzyme"/>
    <property type="match status" value="1"/>
</dbReference>
<dbReference type="FunFam" id="3.50.50.60:FF:000002">
    <property type="entry name" value="tRNA uridine 5-carboxymethylaminomethyl modification enzyme MnmG"/>
    <property type="match status" value="1"/>
</dbReference>
<dbReference type="Gene3D" id="3.50.50.60">
    <property type="entry name" value="FAD/NAD(P)-binding domain"/>
    <property type="match status" value="2"/>
</dbReference>
<dbReference type="Gene3D" id="1.10.150.570">
    <property type="entry name" value="GidA associated domain, C-terminal subdomain"/>
    <property type="match status" value="1"/>
</dbReference>
<dbReference type="HAMAP" id="MF_00129">
    <property type="entry name" value="MnmG_GidA"/>
    <property type="match status" value="1"/>
</dbReference>
<dbReference type="InterPro" id="IPR036188">
    <property type="entry name" value="FAD/NAD-bd_sf"/>
</dbReference>
<dbReference type="InterPro" id="IPR049312">
    <property type="entry name" value="GIDA_C_N"/>
</dbReference>
<dbReference type="InterPro" id="IPR004416">
    <property type="entry name" value="MnmG"/>
</dbReference>
<dbReference type="InterPro" id="IPR002218">
    <property type="entry name" value="MnmG-rel"/>
</dbReference>
<dbReference type="InterPro" id="IPR020595">
    <property type="entry name" value="MnmG-rel_CS"/>
</dbReference>
<dbReference type="InterPro" id="IPR026904">
    <property type="entry name" value="MnmG_C"/>
</dbReference>
<dbReference type="InterPro" id="IPR047001">
    <property type="entry name" value="MnmG_C_subdom"/>
</dbReference>
<dbReference type="InterPro" id="IPR044920">
    <property type="entry name" value="MnmG_C_subdom_sf"/>
</dbReference>
<dbReference type="InterPro" id="IPR040131">
    <property type="entry name" value="MnmG_N"/>
</dbReference>
<dbReference type="NCBIfam" id="TIGR00136">
    <property type="entry name" value="mnmG_gidA"/>
    <property type="match status" value="1"/>
</dbReference>
<dbReference type="PANTHER" id="PTHR11806">
    <property type="entry name" value="GLUCOSE INHIBITED DIVISION PROTEIN A"/>
    <property type="match status" value="1"/>
</dbReference>
<dbReference type="PANTHER" id="PTHR11806:SF0">
    <property type="entry name" value="PROTEIN MTO1 HOMOLOG, MITOCHONDRIAL"/>
    <property type="match status" value="1"/>
</dbReference>
<dbReference type="Pfam" id="PF01134">
    <property type="entry name" value="GIDA"/>
    <property type="match status" value="1"/>
</dbReference>
<dbReference type="Pfam" id="PF21680">
    <property type="entry name" value="GIDA_C_1st"/>
    <property type="match status" value="1"/>
</dbReference>
<dbReference type="Pfam" id="PF13932">
    <property type="entry name" value="SAM_GIDA_C"/>
    <property type="match status" value="1"/>
</dbReference>
<dbReference type="SMART" id="SM01228">
    <property type="entry name" value="GIDA_assoc_3"/>
    <property type="match status" value="1"/>
</dbReference>
<dbReference type="SUPFAM" id="SSF51905">
    <property type="entry name" value="FAD/NAD(P)-binding domain"/>
    <property type="match status" value="1"/>
</dbReference>
<dbReference type="PROSITE" id="PS01280">
    <property type="entry name" value="GIDA_1"/>
    <property type="match status" value="1"/>
</dbReference>
<dbReference type="PROSITE" id="PS01281">
    <property type="entry name" value="GIDA_2"/>
    <property type="match status" value="1"/>
</dbReference>
<reference key="1">
    <citation type="journal article" date="2007" name="J. Bacteriol.">
        <title>Genome sequence analysis of the emerging human pathogenic acetic acid bacterium Granulibacter bethesdensis.</title>
        <authorList>
            <person name="Greenberg D.E."/>
            <person name="Porcella S.F."/>
            <person name="Zelazny A.M."/>
            <person name="Virtaneva K."/>
            <person name="Sturdevant D.E."/>
            <person name="Kupko J.J. III"/>
            <person name="Barbian K.D."/>
            <person name="Babar A."/>
            <person name="Dorward D.W."/>
            <person name="Holland S.M."/>
        </authorList>
    </citation>
    <scope>NUCLEOTIDE SEQUENCE [LARGE SCALE GENOMIC DNA]</scope>
    <source>
        <strain>ATCC BAA-1260 / CGDNIH1</strain>
    </source>
</reference>
<gene>
    <name evidence="1" type="primary">mnmG</name>
    <name evidence="1" type="synonym">gidA</name>
    <name type="ordered locus">GbCGDNIH1_0011</name>
</gene>
<keyword id="KW-0963">Cytoplasm</keyword>
<keyword id="KW-0274">FAD</keyword>
<keyword id="KW-0285">Flavoprotein</keyword>
<keyword id="KW-0520">NAD</keyword>
<keyword id="KW-1185">Reference proteome</keyword>
<keyword id="KW-0819">tRNA processing</keyword>
<organism>
    <name type="scientific">Granulibacter bethesdensis (strain ATCC BAA-1260 / CGDNIH1)</name>
    <dbReference type="NCBI Taxonomy" id="391165"/>
    <lineage>
        <taxon>Bacteria</taxon>
        <taxon>Pseudomonadati</taxon>
        <taxon>Pseudomonadota</taxon>
        <taxon>Alphaproteobacteria</taxon>
        <taxon>Acetobacterales</taxon>
        <taxon>Acetobacteraceae</taxon>
        <taxon>Granulibacter</taxon>
    </lineage>
</organism>